<keyword id="KW-0066">ATP synthesis</keyword>
<keyword id="KW-0067">ATP-binding</keyword>
<keyword id="KW-0997">Cell inner membrane</keyword>
<keyword id="KW-1003">Cell membrane</keyword>
<keyword id="KW-0139">CF(1)</keyword>
<keyword id="KW-0375">Hydrogen ion transport</keyword>
<keyword id="KW-0406">Ion transport</keyword>
<keyword id="KW-0472">Membrane</keyword>
<keyword id="KW-0547">Nucleotide-binding</keyword>
<keyword id="KW-1185">Reference proteome</keyword>
<keyword id="KW-1278">Translocase</keyword>
<keyword id="KW-0813">Transport</keyword>
<accession>Q21DK8</accession>
<feature type="chain" id="PRO_0000254367" description="ATP synthase subunit beta">
    <location>
        <begin position="1"/>
        <end position="470"/>
    </location>
</feature>
<feature type="binding site" evidence="1">
    <location>
        <begin position="148"/>
        <end position="155"/>
    </location>
    <ligand>
        <name>ATP</name>
        <dbReference type="ChEBI" id="CHEBI:30616"/>
    </ligand>
</feature>
<organism>
    <name type="scientific">Saccharophagus degradans (strain 2-40 / ATCC 43961 / DSM 17024)</name>
    <dbReference type="NCBI Taxonomy" id="203122"/>
    <lineage>
        <taxon>Bacteria</taxon>
        <taxon>Pseudomonadati</taxon>
        <taxon>Pseudomonadota</taxon>
        <taxon>Gammaproteobacteria</taxon>
        <taxon>Cellvibrionales</taxon>
        <taxon>Cellvibrionaceae</taxon>
        <taxon>Saccharophagus</taxon>
    </lineage>
</organism>
<reference key="1">
    <citation type="journal article" date="2008" name="PLoS Genet.">
        <title>Complete genome sequence of the complex carbohydrate-degrading marine bacterium, Saccharophagus degradans strain 2-40 T.</title>
        <authorList>
            <person name="Weiner R.M."/>
            <person name="Taylor L.E. II"/>
            <person name="Henrissat B."/>
            <person name="Hauser L."/>
            <person name="Land M."/>
            <person name="Coutinho P.M."/>
            <person name="Rancurel C."/>
            <person name="Saunders E.H."/>
            <person name="Longmire A.G."/>
            <person name="Zhang H."/>
            <person name="Bayer E.A."/>
            <person name="Gilbert H.J."/>
            <person name="Larimer F."/>
            <person name="Zhulin I.B."/>
            <person name="Ekborg N.A."/>
            <person name="Lamed R."/>
            <person name="Richardson P.M."/>
            <person name="Borovok I."/>
            <person name="Hutcheson S."/>
        </authorList>
    </citation>
    <scope>NUCLEOTIDE SEQUENCE [LARGE SCALE GENOMIC DNA]</scope>
    <source>
        <strain>2-40 / ATCC 43961 / DSM 17024</strain>
    </source>
</reference>
<name>ATPB_SACD2</name>
<dbReference type="EC" id="7.1.2.2" evidence="1"/>
<dbReference type="EMBL" id="CP000282">
    <property type="protein sequence ID" value="ABD83221.1"/>
    <property type="molecule type" value="Genomic_DNA"/>
</dbReference>
<dbReference type="RefSeq" id="WP_011470436.1">
    <property type="nucleotide sequence ID" value="NC_007912.1"/>
</dbReference>
<dbReference type="SMR" id="Q21DK8"/>
<dbReference type="STRING" id="203122.Sde_3966"/>
<dbReference type="GeneID" id="98615559"/>
<dbReference type="KEGG" id="sde:Sde_3966"/>
<dbReference type="eggNOG" id="COG0055">
    <property type="taxonomic scope" value="Bacteria"/>
</dbReference>
<dbReference type="HOGENOM" id="CLU_022398_0_2_6"/>
<dbReference type="OrthoDB" id="9801639at2"/>
<dbReference type="Proteomes" id="UP000001947">
    <property type="component" value="Chromosome"/>
</dbReference>
<dbReference type="GO" id="GO:0005886">
    <property type="term" value="C:plasma membrane"/>
    <property type="evidence" value="ECO:0007669"/>
    <property type="project" value="UniProtKB-SubCell"/>
</dbReference>
<dbReference type="GO" id="GO:0045259">
    <property type="term" value="C:proton-transporting ATP synthase complex"/>
    <property type="evidence" value="ECO:0007669"/>
    <property type="project" value="UniProtKB-KW"/>
</dbReference>
<dbReference type="GO" id="GO:0005524">
    <property type="term" value="F:ATP binding"/>
    <property type="evidence" value="ECO:0007669"/>
    <property type="project" value="UniProtKB-UniRule"/>
</dbReference>
<dbReference type="GO" id="GO:0016887">
    <property type="term" value="F:ATP hydrolysis activity"/>
    <property type="evidence" value="ECO:0007669"/>
    <property type="project" value="InterPro"/>
</dbReference>
<dbReference type="GO" id="GO:0046933">
    <property type="term" value="F:proton-transporting ATP synthase activity, rotational mechanism"/>
    <property type="evidence" value="ECO:0007669"/>
    <property type="project" value="UniProtKB-UniRule"/>
</dbReference>
<dbReference type="CDD" id="cd18110">
    <property type="entry name" value="ATP-synt_F1_beta_C"/>
    <property type="match status" value="1"/>
</dbReference>
<dbReference type="CDD" id="cd18115">
    <property type="entry name" value="ATP-synt_F1_beta_N"/>
    <property type="match status" value="1"/>
</dbReference>
<dbReference type="CDD" id="cd01133">
    <property type="entry name" value="F1-ATPase_beta_CD"/>
    <property type="match status" value="1"/>
</dbReference>
<dbReference type="FunFam" id="1.10.1140.10:FF:000001">
    <property type="entry name" value="ATP synthase subunit beta"/>
    <property type="match status" value="1"/>
</dbReference>
<dbReference type="FunFam" id="3.40.50.300:FF:000004">
    <property type="entry name" value="ATP synthase subunit beta"/>
    <property type="match status" value="1"/>
</dbReference>
<dbReference type="Gene3D" id="2.40.10.170">
    <property type="match status" value="1"/>
</dbReference>
<dbReference type="Gene3D" id="1.10.1140.10">
    <property type="entry name" value="Bovine Mitochondrial F1-atpase, Atp Synthase Beta Chain, Chain D, domain 3"/>
    <property type="match status" value="1"/>
</dbReference>
<dbReference type="Gene3D" id="3.40.50.300">
    <property type="entry name" value="P-loop containing nucleotide triphosphate hydrolases"/>
    <property type="match status" value="1"/>
</dbReference>
<dbReference type="HAMAP" id="MF_01347">
    <property type="entry name" value="ATP_synth_beta_bact"/>
    <property type="match status" value="1"/>
</dbReference>
<dbReference type="InterPro" id="IPR003593">
    <property type="entry name" value="AAA+_ATPase"/>
</dbReference>
<dbReference type="InterPro" id="IPR055190">
    <property type="entry name" value="ATP-synt_VA_C"/>
</dbReference>
<dbReference type="InterPro" id="IPR005722">
    <property type="entry name" value="ATP_synth_F1_bsu"/>
</dbReference>
<dbReference type="InterPro" id="IPR020003">
    <property type="entry name" value="ATPase_a/bsu_AS"/>
</dbReference>
<dbReference type="InterPro" id="IPR050053">
    <property type="entry name" value="ATPase_alpha/beta_chains"/>
</dbReference>
<dbReference type="InterPro" id="IPR004100">
    <property type="entry name" value="ATPase_F1/V1/A1_a/bsu_N"/>
</dbReference>
<dbReference type="InterPro" id="IPR036121">
    <property type="entry name" value="ATPase_F1/V1/A1_a/bsu_N_sf"/>
</dbReference>
<dbReference type="InterPro" id="IPR000194">
    <property type="entry name" value="ATPase_F1/V1/A1_a/bsu_nucl-bd"/>
</dbReference>
<dbReference type="InterPro" id="IPR024034">
    <property type="entry name" value="ATPase_F1/V1_b/a_C"/>
</dbReference>
<dbReference type="InterPro" id="IPR027417">
    <property type="entry name" value="P-loop_NTPase"/>
</dbReference>
<dbReference type="NCBIfam" id="TIGR01039">
    <property type="entry name" value="atpD"/>
    <property type="match status" value="1"/>
</dbReference>
<dbReference type="PANTHER" id="PTHR15184">
    <property type="entry name" value="ATP SYNTHASE"/>
    <property type="match status" value="1"/>
</dbReference>
<dbReference type="PANTHER" id="PTHR15184:SF71">
    <property type="entry name" value="ATP SYNTHASE SUBUNIT BETA, MITOCHONDRIAL"/>
    <property type="match status" value="1"/>
</dbReference>
<dbReference type="Pfam" id="PF00006">
    <property type="entry name" value="ATP-synt_ab"/>
    <property type="match status" value="1"/>
</dbReference>
<dbReference type="Pfam" id="PF02874">
    <property type="entry name" value="ATP-synt_ab_N"/>
    <property type="match status" value="1"/>
</dbReference>
<dbReference type="Pfam" id="PF22919">
    <property type="entry name" value="ATP-synt_VA_C"/>
    <property type="match status" value="1"/>
</dbReference>
<dbReference type="SMART" id="SM00382">
    <property type="entry name" value="AAA"/>
    <property type="match status" value="1"/>
</dbReference>
<dbReference type="SUPFAM" id="SSF47917">
    <property type="entry name" value="C-terminal domain of alpha and beta subunits of F1 ATP synthase"/>
    <property type="match status" value="1"/>
</dbReference>
<dbReference type="SUPFAM" id="SSF50615">
    <property type="entry name" value="N-terminal domain of alpha and beta subunits of F1 ATP synthase"/>
    <property type="match status" value="1"/>
</dbReference>
<dbReference type="SUPFAM" id="SSF52540">
    <property type="entry name" value="P-loop containing nucleoside triphosphate hydrolases"/>
    <property type="match status" value="1"/>
</dbReference>
<dbReference type="PROSITE" id="PS00152">
    <property type="entry name" value="ATPASE_ALPHA_BETA"/>
    <property type="match status" value="1"/>
</dbReference>
<proteinExistence type="inferred from homology"/>
<gene>
    <name evidence="1" type="primary">atpD</name>
    <name type="ordered locus">Sde_3966</name>
</gene>
<sequence>MSSGRIVQIIGAVIDVEFPRDSVPKVYDALTVADKGLTLEVQQQLGDGVVRAIAMGGSEGVSRGLAVENTGAPINVPVGTATLGRIMDVLGNPIDEKGPINETERASIHRKAPKYDELAASEELLATGIKVIDLVCPFAKGGKVGLFGGAGVGKTVNMMELINNIATEHSGLSVFAGVGERTREGNDFYFEMQEAGVVNVDKFDESKVAMVYGQMNEPPGNRLRVALTGLTMAEKFRDEGKDVLLFVDNIYRYTLAGTEVSALLGRMPSAVGYQPTLAEEMGVLQERITSTKTGSITSIQAVYVPADDLTDPSPATTFAHLDSTVVLSRDIAAKGIYPAIDPLDSSSRQLDPLIIGQEHYDTARGVQSVLQRYKELKDIIAILGMDELSEEDKLTVSRARKIERFLSQPFNVAKVFTGQDGKIVSLKDTISGFQGLLSGQYDDLPEQAFYMVGSIDEAIEKAKKMKEKAA</sequence>
<comment type="function">
    <text evidence="1">Produces ATP from ADP in the presence of a proton gradient across the membrane. The catalytic sites are hosted primarily by the beta subunits.</text>
</comment>
<comment type="catalytic activity">
    <reaction evidence="1">
        <text>ATP + H2O + 4 H(+)(in) = ADP + phosphate + 5 H(+)(out)</text>
        <dbReference type="Rhea" id="RHEA:57720"/>
        <dbReference type="ChEBI" id="CHEBI:15377"/>
        <dbReference type="ChEBI" id="CHEBI:15378"/>
        <dbReference type="ChEBI" id="CHEBI:30616"/>
        <dbReference type="ChEBI" id="CHEBI:43474"/>
        <dbReference type="ChEBI" id="CHEBI:456216"/>
        <dbReference type="EC" id="7.1.2.2"/>
    </reaction>
</comment>
<comment type="subunit">
    <text evidence="1">F-type ATPases have 2 components, CF(1) - the catalytic core - and CF(0) - the membrane proton channel. CF(1) has five subunits: alpha(3), beta(3), gamma(1), delta(1), epsilon(1). CF(0) has three main subunits: a(1), b(2) and c(9-12). The alpha and beta chains form an alternating ring which encloses part of the gamma chain. CF(1) is attached to CF(0) by a central stalk formed by the gamma and epsilon chains, while a peripheral stalk is formed by the delta and b chains.</text>
</comment>
<comment type="subcellular location">
    <subcellularLocation>
        <location evidence="1">Cell inner membrane</location>
        <topology evidence="1">Peripheral membrane protein</topology>
    </subcellularLocation>
</comment>
<comment type="similarity">
    <text evidence="1">Belongs to the ATPase alpha/beta chains family.</text>
</comment>
<protein>
    <recommendedName>
        <fullName evidence="1">ATP synthase subunit beta</fullName>
        <ecNumber evidence="1">7.1.2.2</ecNumber>
    </recommendedName>
    <alternativeName>
        <fullName evidence="1">ATP synthase F1 sector subunit beta</fullName>
    </alternativeName>
    <alternativeName>
        <fullName evidence="1">F-ATPase subunit beta</fullName>
    </alternativeName>
</protein>
<evidence type="ECO:0000255" key="1">
    <source>
        <dbReference type="HAMAP-Rule" id="MF_01347"/>
    </source>
</evidence>